<proteinExistence type="inferred from homology"/>
<evidence type="ECO:0000255" key="1">
    <source>
        <dbReference type="HAMAP-Rule" id="MF_01251"/>
    </source>
</evidence>
<evidence type="ECO:0000255" key="2">
    <source>
        <dbReference type="PROSITE-ProRule" id="PRU01266"/>
    </source>
</evidence>
<organism>
    <name type="scientific">Bacteroides thetaiotaomicron (strain ATCC 29148 / DSM 2079 / JCM 5827 / CCUG 10774 / NCTC 10582 / VPI-5482 / E50)</name>
    <dbReference type="NCBI Taxonomy" id="226186"/>
    <lineage>
        <taxon>Bacteria</taxon>
        <taxon>Pseudomonadati</taxon>
        <taxon>Bacteroidota</taxon>
        <taxon>Bacteroidia</taxon>
        <taxon>Bacteroidales</taxon>
        <taxon>Bacteroidaceae</taxon>
        <taxon>Bacteroides</taxon>
    </lineage>
</organism>
<gene>
    <name type="ordered locus">BT_0254</name>
</gene>
<sequence length="620" mass="71197">MKEYRLTDWLPTTKKEVELRGWDELDVILFSGDAYVDHPSFGAAVIGRILEAEGLKVAIIPQPNWRDDLRDFRKLGRPRLFFGISAGSMDSMVNKYTANKRLRSEDAYTPDGRPDMRPEYPSIVYSQILKRLYPDVPVILGSIEASLRRLSHYDYWQDKVQKSILCDSGADLLIYGMGEKPIVELTRKMKELLPAEDASLTAGELKKIAGTIPQTAYLCRATEWTPAADDIQLYSHEECLADKKKQASNFRHIEEESNKYAASRITQEVDNKVVVVNPPYPPMSQEELDHSYDLPYTRLPHPKYKGKRIPAYDMIKFSVNIHRGCFGGCAFCTISAHQGKFIVSRSKKSILNEVKEVMQLPDFKGYLSDLGGPSANMYQMKGKDEAICKKCKRPSCIHPKVCPNLNSDHCPLLDIYKAVDAIPGIKKSFIGSGVRYDLLLHQSKDAATNRSTAEYTRELIVNHVSGRLKVAPEHTSDRVLSIMRKPSFEQFETFKKIFDRINREENLRQQLIPYFISSHPGCKEEDMAELAVITKRLDFHLEQVQDFTPTPMTVATEAWYSGFHPYTLEPVFSAKTQREKLAQRQFFFWYKPEERKNILNELRRIGRQDLIDKLYGKRNK</sequence>
<comment type="cofactor">
    <cofactor evidence="1">
        <name>[4Fe-4S] cluster</name>
        <dbReference type="ChEBI" id="CHEBI:49883"/>
    </cofactor>
    <text evidence="1">Binds 1 [4Fe-4S] cluster. The cluster is coordinated with 3 cysteines and an exchangeable S-adenosyl-L-methionine.</text>
</comment>
<comment type="similarity">
    <text evidence="1">Belongs to the UPF0313 family.</text>
</comment>
<name>Y254_BACTN</name>
<reference key="1">
    <citation type="journal article" date="2003" name="Science">
        <title>A genomic view of the human-Bacteroides thetaiotaomicron symbiosis.</title>
        <authorList>
            <person name="Xu J."/>
            <person name="Bjursell M.K."/>
            <person name="Himrod J."/>
            <person name="Deng S."/>
            <person name="Carmichael L.K."/>
            <person name="Chiang H.C."/>
            <person name="Hooper L.V."/>
            <person name="Gordon J.I."/>
        </authorList>
    </citation>
    <scope>NUCLEOTIDE SEQUENCE [LARGE SCALE GENOMIC DNA]</scope>
    <source>
        <strain>ATCC 29148 / DSM 2079 / JCM 5827 / CCUG 10774 / NCTC 10582 / VPI-5482 / E50</strain>
    </source>
</reference>
<protein>
    <recommendedName>
        <fullName evidence="1">UPF0313 protein BT_0254</fullName>
    </recommendedName>
</protein>
<dbReference type="EMBL" id="AE015928">
    <property type="protein sequence ID" value="AAO75361.1"/>
    <property type="molecule type" value="Genomic_DNA"/>
</dbReference>
<dbReference type="RefSeq" id="NP_809167.1">
    <property type="nucleotide sequence ID" value="NC_004663.1"/>
</dbReference>
<dbReference type="RefSeq" id="WP_011107187.1">
    <property type="nucleotide sequence ID" value="NC_004663.1"/>
</dbReference>
<dbReference type="FunCoup" id="Q8AB57">
    <property type="interactions" value="19"/>
</dbReference>
<dbReference type="STRING" id="226186.BT_0254"/>
<dbReference type="PaxDb" id="226186-BT_0254"/>
<dbReference type="EnsemblBacteria" id="AAO75361">
    <property type="protein sequence ID" value="AAO75361"/>
    <property type="gene ID" value="BT_0254"/>
</dbReference>
<dbReference type="GeneID" id="60926218"/>
<dbReference type="KEGG" id="bth:BT_0254"/>
<dbReference type="PATRIC" id="fig|226186.12.peg.255"/>
<dbReference type="eggNOG" id="COG1032">
    <property type="taxonomic scope" value="Bacteria"/>
</dbReference>
<dbReference type="HOGENOM" id="CLU_018288_2_0_10"/>
<dbReference type="InParanoid" id="Q8AB57"/>
<dbReference type="OrthoDB" id="9803479at2"/>
<dbReference type="Proteomes" id="UP000001414">
    <property type="component" value="Chromosome"/>
</dbReference>
<dbReference type="GO" id="GO:0051539">
    <property type="term" value="F:4 iron, 4 sulfur cluster binding"/>
    <property type="evidence" value="ECO:0007669"/>
    <property type="project" value="UniProtKB-KW"/>
</dbReference>
<dbReference type="GO" id="GO:0005506">
    <property type="term" value="F:iron ion binding"/>
    <property type="evidence" value="ECO:0007669"/>
    <property type="project" value="UniProtKB-UniRule"/>
</dbReference>
<dbReference type="GO" id="GO:0008168">
    <property type="term" value="F:methyltransferase activity"/>
    <property type="evidence" value="ECO:0007669"/>
    <property type="project" value="InterPro"/>
</dbReference>
<dbReference type="GO" id="GO:0003676">
    <property type="term" value="F:nucleic acid binding"/>
    <property type="evidence" value="ECO:0007669"/>
    <property type="project" value="InterPro"/>
</dbReference>
<dbReference type="GO" id="GO:0032259">
    <property type="term" value="P:methylation"/>
    <property type="evidence" value="ECO:0007669"/>
    <property type="project" value="InterPro"/>
</dbReference>
<dbReference type="Gene3D" id="3.30.750.200">
    <property type="match status" value="1"/>
</dbReference>
<dbReference type="Gene3D" id="3.30.750.210">
    <property type="match status" value="1"/>
</dbReference>
<dbReference type="HAMAP" id="MF_01251">
    <property type="entry name" value="UPF0313"/>
    <property type="match status" value="1"/>
</dbReference>
<dbReference type="InterPro" id="IPR002052">
    <property type="entry name" value="DNA_methylase_N6_adenine_CS"/>
</dbReference>
<dbReference type="InterPro" id="IPR006638">
    <property type="entry name" value="Elp3/MiaA/NifB-like_rSAM"/>
</dbReference>
<dbReference type="InterPro" id="IPR020612">
    <property type="entry name" value="Methylthiotransferase_CS"/>
</dbReference>
<dbReference type="InterPro" id="IPR007197">
    <property type="entry name" value="rSAM"/>
</dbReference>
<dbReference type="InterPro" id="IPR022946">
    <property type="entry name" value="UPF0313"/>
</dbReference>
<dbReference type="InterPro" id="IPR024560">
    <property type="entry name" value="UPF0313_C"/>
</dbReference>
<dbReference type="InterPro" id="IPR013704">
    <property type="entry name" value="UPF0313_N"/>
</dbReference>
<dbReference type="NCBIfam" id="TIGR03904">
    <property type="entry name" value="SAM_YgiQ"/>
    <property type="match status" value="1"/>
</dbReference>
<dbReference type="PANTHER" id="PTHR32331">
    <property type="entry name" value="UPF0313 PROTEIN YGIQ"/>
    <property type="match status" value="1"/>
</dbReference>
<dbReference type="PANTHER" id="PTHR32331:SF0">
    <property type="entry name" value="UPF0313 PROTEIN YGIQ"/>
    <property type="match status" value="1"/>
</dbReference>
<dbReference type="Pfam" id="PF11842">
    <property type="entry name" value="DUF3362"/>
    <property type="match status" value="1"/>
</dbReference>
<dbReference type="Pfam" id="PF08497">
    <property type="entry name" value="Radical_SAM_N"/>
    <property type="match status" value="1"/>
</dbReference>
<dbReference type="SFLD" id="SFLDG01082">
    <property type="entry name" value="B12-binding_domain_containing"/>
    <property type="match status" value="1"/>
</dbReference>
<dbReference type="SFLD" id="SFLDS00029">
    <property type="entry name" value="Radical_SAM"/>
    <property type="match status" value="1"/>
</dbReference>
<dbReference type="SFLD" id="SFLDG01069">
    <property type="entry name" value="UPF0313"/>
    <property type="match status" value="1"/>
</dbReference>
<dbReference type="SMART" id="SM00729">
    <property type="entry name" value="Elp3"/>
    <property type="match status" value="1"/>
</dbReference>
<dbReference type="SUPFAM" id="SSF102114">
    <property type="entry name" value="Radical SAM enzymes"/>
    <property type="match status" value="1"/>
</dbReference>
<dbReference type="PROSITE" id="PS51918">
    <property type="entry name" value="RADICAL_SAM"/>
    <property type="match status" value="1"/>
</dbReference>
<feature type="chain" id="PRO_0000076379" description="UPF0313 protein BT_0254">
    <location>
        <begin position="1"/>
        <end position="620"/>
    </location>
</feature>
<feature type="domain" description="Radical SAM core" evidence="2">
    <location>
        <begin position="311"/>
        <end position="591"/>
    </location>
</feature>
<feature type="binding site" evidence="1">
    <location>
        <position position="325"/>
    </location>
    <ligand>
        <name>[4Fe-4S] cluster</name>
        <dbReference type="ChEBI" id="CHEBI:49883"/>
        <note>4Fe-4S-S-AdoMet</note>
    </ligand>
</feature>
<feature type="binding site" evidence="1">
    <location>
        <position position="329"/>
    </location>
    <ligand>
        <name>[4Fe-4S] cluster</name>
        <dbReference type="ChEBI" id="CHEBI:49883"/>
        <note>4Fe-4S-S-AdoMet</note>
    </ligand>
</feature>
<feature type="binding site" evidence="1">
    <location>
        <position position="332"/>
    </location>
    <ligand>
        <name>[4Fe-4S] cluster</name>
        <dbReference type="ChEBI" id="CHEBI:49883"/>
        <note>4Fe-4S-S-AdoMet</note>
    </ligand>
</feature>
<keyword id="KW-0004">4Fe-4S</keyword>
<keyword id="KW-0408">Iron</keyword>
<keyword id="KW-0411">Iron-sulfur</keyword>
<keyword id="KW-0479">Metal-binding</keyword>
<keyword id="KW-1185">Reference proteome</keyword>
<keyword id="KW-0949">S-adenosyl-L-methionine</keyword>
<accession>Q8AB57</accession>